<comment type="function">
    <text evidence="1">Catalyzes the reversible isomerization of glucose-6-phosphate to fructose-6-phosphate.</text>
</comment>
<comment type="catalytic activity">
    <reaction evidence="1">
        <text>alpha-D-glucose 6-phosphate = beta-D-fructose 6-phosphate</text>
        <dbReference type="Rhea" id="RHEA:11816"/>
        <dbReference type="ChEBI" id="CHEBI:57634"/>
        <dbReference type="ChEBI" id="CHEBI:58225"/>
        <dbReference type="EC" id="5.3.1.9"/>
    </reaction>
</comment>
<comment type="pathway">
    <text evidence="1">Carbohydrate biosynthesis; gluconeogenesis.</text>
</comment>
<comment type="pathway">
    <text evidence="1">Carbohydrate degradation; glycolysis; D-glyceraldehyde 3-phosphate and glycerone phosphate from D-glucose: step 2/4.</text>
</comment>
<comment type="subcellular location">
    <subcellularLocation>
        <location evidence="1">Cytoplasm</location>
    </subcellularLocation>
</comment>
<comment type="similarity">
    <text evidence="1">Belongs to the GPI family.</text>
</comment>
<gene>
    <name evidence="1" type="primary">pgi</name>
    <name type="ordered locus">EFER_4117</name>
</gene>
<reference key="1">
    <citation type="journal article" date="2009" name="PLoS Genet.">
        <title>Organised genome dynamics in the Escherichia coli species results in highly diverse adaptive paths.</title>
        <authorList>
            <person name="Touchon M."/>
            <person name="Hoede C."/>
            <person name="Tenaillon O."/>
            <person name="Barbe V."/>
            <person name="Baeriswyl S."/>
            <person name="Bidet P."/>
            <person name="Bingen E."/>
            <person name="Bonacorsi S."/>
            <person name="Bouchier C."/>
            <person name="Bouvet O."/>
            <person name="Calteau A."/>
            <person name="Chiapello H."/>
            <person name="Clermont O."/>
            <person name="Cruveiller S."/>
            <person name="Danchin A."/>
            <person name="Diard M."/>
            <person name="Dossat C."/>
            <person name="Karoui M.E."/>
            <person name="Frapy E."/>
            <person name="Garry L."/>
            <person name="Ghigo J.M."/>
            <person name="Gilles A.M."/>
            <person name="Johnson J."/>
            <person name="Le Bouguenec C."/>
            <person name="Lescat M."/>
            <person name="Mangenot S."/>
            <person name="Martinez-Jehanne V."/>
            <person name="Matic I."/>
            <person name="Nassif X."/>
            <person name="Oztas S."/>
            <person name="Petit M.A."/>
            <person name="Pichon C."/>
            <person name="Rouy Z."/>
            <person name="Ruf C.S."/>
            <person name="Schneider D."/>
            <person name="Tourret J."/>
            <person name="Vacherie B."/>
            <person name="Vallenet D."/>
            <person name="Medigue C."/>
            <person name="Rocha E.P.C."/>
            <person name="Denamur E."/>
        </authorList>
    </citation>
    <scope>NUCLEOTIDE SEQUENCE [LARGE SCALE GENOMIC DNA]</scope>
    <source>
        <strain>ATCC 35469 / DSM 13698 / BCRC 15582 / CCUG 18766 / IAM 14443 / JCM 21226 / LMG 7866 / NBRC 102419 / NCTC 12128 / CDC 0568-73</strain>
    </source>
</reference>
<keyword id="KW-0007">Acetylation</keyword>
<keyword id="KW-0963">Cytoplasm</keyword>
<keyword id="KW-0312">Gluconeogenesis</keyword>
<keyword id="KW-0324">Glycolysis</keyword>
<keyword id="KW-0413">Isomerase</keyword>
<evidence type="ECO:0000255" key="1">
    <source>
        <dbReference type="HAMAP-Rule" id="MF_00473"/>
    </source>
</evidence>
<protein>
    <recommendedName>
        <fullName evidence="1">Glucose-6-phosphate isomerase</fullName>
        <shortName evidence="1">GPI</shortName>
        <ecNumber evidence="1">5.3.1.9</ecNumber>
    </recommendedName>
    <alternativeName>
        <fullName evidence="1">Phosphoglucose isomerase</fullName>
        <shortName evidence="1">PGI</shortName>
    </alternativeName>
    <alternativeName>
        <fullName evidence="1">Phosphohexose isomerase</fullName>
        <shortName evidence="1">PHI</shortName>
    </alternativeName>
</protein>
<sequence length="549" mass="61533">MKNINPTQTAAWQALQKHFDEMKDVTIADLFAKDGDRFSKFSATFDDQMLVDYSKNRITEETLAKLQDLAKECDLASAIKSMFSGEKINRTENRAVLHVALRNRSNTPILVDGKDVMPEVNAVLEKMKTFSEAIISGEWKGYTGKAITDVVNIGIGGSDLGPYMVTEALRPYKNHLNMHFVSNVDGTHIAEVLKKVNPETTLFLVASKTFTTQETMTNAHSARDWFLKAAGDEKHVAKHFAALSTNATAVGEFGIDTANMFEFWDWVGGRYSLWSAIGLSIVLSIGFDNFVELLSGAHAMDKHFSTTPAEKNLPVLLALIGIWYNNFFGAETEAILPYDQYMHRFAAYFQQGNMESNGKYVDRNGNVVDYQTGPIIWGEPGTNGQHAFYQLIHQGTKMVPCDFIAPAITHNPLSDHHQKLLSNFFAQTEALAFGKSREVVEQEYRDQGKDPATLDYVVPFKVFEGNRPTNSILLREITPFSLGALIALYEHKIFTQGVILNIFTFDQWGVELGKQLANRILPELKDDKEISSHDSSTNGLINRYKAWRG</sequence>
<organism>
    <name type="scientific">Escherichia fergusonii (strain ATCC 35469 / DSM 13698 / CCUG 18766 / IAM 14443 / JCM 21226 / LMG 7866 / NBRC 102419 / NCTC 12128 / CDC 0568-73)</name>
    <dbReference type="NCBI Taxonomy" id="585054"/>
    <lineage>
        <taxon>Bacteria</taxon>
        <taxon>Pseudomonadati</taxon>
        <taxon>Pseudomonadota</taxon>
        <taxon>Gammaproteobacteria</taxon>
        <taxon>Enterobacterales</taxon>
        <taxon>Enterobacteriaceae</taxon>
        <taxon>Escherichia</taxon>
    </lineage>
</organism>
<proteinExistence type="inferred from homology"/>
<accession>B7LKZ8</accession>
<name>G6PI_ESCF3</name>
<feature type="chain" id="PRO_1000125725" description="Glucose-6-phosphate isomerase">
    <location>
        <begin position="1"/>
        <end position="549"/>
    </location>
</feature>
<feature type="active site" description="Proton donor" evidence="1">
    <location>
        <position position="355"/>
    </location>
</feature>
<feature type="active site" evidence="1">
    <location>
        <position position="386"/>
    </location>
</feature>
<feature type="active site" evidence="1">
    <location>
        <position position="514"/>
    </location>
</feature>
<feature type="modified residue" description="N6-acetyllysine" evidence="1">
    <location>
        <position position="80"/>
    </location>
</feature>
<feature type="modified residue" description="N6-acetyllysine" evidence="1">
    <location>
        <position position="228"/>
    </location>
</feature>
<feature type="modified residue" description="N6-acetyllysine" evidence="1">
    <location>
        <position position="234"/>
    </location>
</feature>
<dbReference type="EC" id="5.3.1.9" evidence="1"/>
<dbReference type="EMBL" id="CU928158">
    <property type="protein sequence ID" value="CAQ91539.1"/>
    <property type="molecule type" value="Genomic_DNA"/>
</dbReference>
<dbReference type="RefSeq" id="WP_000790002.1">
    <property type="nucleotide sequence ID" value="NC_011740.1"/>
</dbReference>
<dbReference type="SMR" id="B7LKZ8"/>
<dbReference type="GeneID" id="75059297"/>
<dbReference type="KEGG" id="efe:EFER_4117"/>
<dbReference type="HOGENOM" id="CLU_017947_3_1_6"/>
<dbReference type="OrthoDB" id="140919at2"/>
<dbReference type="UniPathway" id="UPA00109">
    <property type="reaction ID" value="UER00181"/>
</dbReference>
<dbReference type="UniPathway" id="UPA00138"/>
<dbReference type="Proteomes" id="UP000000745">
    <property type="component" value="Chromosome"/>
</dbReference>
<dbReference type="GO" id="GO:0005829">
    <property type="term" value="C:cytosol"/>
    <property type="evidence" value="ECO:0007669"/>
    <property type="project" value="TreeGrafter"/>
</dbReference>
<dbReference type="GO" id="GO:0097367">
    <property type="term" value="F:carbohydrate derivative binding"/>
    <property type="evidence" value="ECO:0007669"/>
    <property type="project" value="InterPro"/>
</dbReference>
<dbReference type="GO" id="GO:0004347">
    <property type="term" value="F:glucose-6-phosphate isomerase activity"/>
    <property type="evidence" value="ECO:0007669"/>
    <property type="project" value="UniProtKB-UniRule"/>
</dbReference>
<dbReference type="GO" id="GO:0048029">
    <property type="term" value="F:monosaccharide binding"/>
    <property type="evidence" value="ECO:0007669"/>
    <property type="project" value="TreeGrafter"/>
</dbReference>
<dbReference type="GO" id="GO:0006094">
    <property type="term" value="P:gluconeogenesis"/>
    <property type="evidence" value="ECO:0007669"/>
    <property type="project" value="UniProtKB-UniRule"/>
</dbReference>
<dbReference type="GO" id="GO:0051156">
    <property type="term" value="P:glucose 6-phosphate metabolic process"/>
    <property type="evidence" value="ECO:0007669"/>
    <property type="project" value="TreeGrafter"/>
</dbReference>
<dbReference type="GO" id="GO:0006096">
    <property type="term" value="P:glycolytic process"/>
    <property type="evidence" value="ECO:0007669"/>
    <property type="project" value="UniProtKB-UniRule"/>
</dbReference>
<dbReference type="CDD" id="cd05015">
    <property type="entry name" value="SIS_PGI_1"/>
    <property type="match status" value="1"/>
</dbReference>
<dbReference type="CDD" id="cd05016">
    <property type="entry name" value="SIS_PGI_2"/>
    <property type="match status" value="1"/>
</dbReference>
<dbReference type="FunFam" id="1.10.1390.10:FF:000001">
    <property type="entry name" value="Glucose-6-phosphate isomerase"/>
    <property type="match status" value="1"/>
</dbReference>
<dbReference type="FunFam" id="3.40.50.10490:FF:000004">
    <property type="entry name" value="Glucose-6-phosphate isomerase"/>
    <property type="match status" value="1"/>
</dbReference>
<dbReference type="Gene3D" id="1.10.1390.10">
    <property type="match status" value="1"/>
</dbReference>
<dbReference type="Gene3D" id="3.40.50.10490">
    <property type="entry name" value="Glucose-6-phosphate isomerase like protein, domain 1"/>
    <property type="match status" value="2"/>
</dbReference>
<dbReference type="HAMAP" id="MF_00473">
    <property type="entry name" value="G6P_isomerase"/>
    <property type="match status" value="1"/>
</dbReference>
<dbReference type="InterPro" id="IPR001672">
    <property type="entry name" value="G6P_Isomerase"/>
</dbReference>
<dbReference type="InterPro" id="IPR023096">
    <property type="entry name" value="G6P_Isomerase_C"/>
</dbReference>
<dbReference type="InterPro" id="IPR018189">
    <property type="entry name" value="Phosphoglucose_isomerase_CS"/>
</dbReference>
<dbReference type="InterPro" id="IPR046348">
    <property type="entry name" value="SIS_dom_sf"/>
</dbReference>
<dbReference type="InterPro" id="IPR035476">
    <property type="entry name" value="SIS_PGI_1"/>
</dbReference>
<dbReference type="InterPro" id="IPR035482">
    <property type="entry name" value="SIS_PGI_2"/>
</dbReference>
<dbReference type="NCBIfam" id="NF001211">
    <property type="entry name" value="PRK00179.1"/>
    <property type="match status" value="1"/>
</dbReference>
<dbReference type="PANTHER" id="PTHR11469">
    <property type="entry name" value="GLUCOSE-6-PHOSPHATE ISOMERASE"/>
    <property type="match status" value="1"/>
</dbReference>
<dbReference type="PANTHER" id="PTHR11469:SF1">
    <property type="entry name" value="GLUCOSE-6-PHOSPHATE ISOMERASE"/>
    <property type="match status" value="1"/>
</dbReference>
<dbReference type="Pfam" id="PF00342">
    <property type="entry name" value="PGI"/>
    <property type="match status" value="1"/>
</dbReference>
<dbReference type="PRINTS" id="PR00662">
    <property type="entry name" value="G6PISOMERASE"/>
</dbReference>
<dbReference type="SUPFAM" id="SSF53697">
    <property type="entry name" value="SIS domain"/>
    <property type="match status" value="1"/>
</dbReference>
<dbReference type="PROSITE" id="PS00765">
    <property type="entry name" value="P_GLUCOSE_ISOMERASE_1"/>
    <property type="match status" value="1"/>
</dbReference>
<dbReference type="PROSITE" id="PS00174">
    <property type="entry name" value="P_GLUCOSE_ISOMERASE_2"/>
    <property type="match status" value="1"/>
</dbReference>
<dbReference type="PROSITE" id="PS51463">
    <property type="entry name" value="P_GLUCOSE_ISOMERASE_3"/>
    <property type="match status" value="1"/>
</dbReference>